<name>IOVO_AEPAR</name>
<feature type="chain" id="PRO_0000073047" description="Ovomucoid">
    <location>
        <begin position="1" status="less than"/>
        <end position="54" status="greater than"/>
    </location>
</feature>
<feature type="domain" description="Kazal-like" evidence="1">
    <location>
        <begin position="4"/>
        <end position="54"/>
    </location>
</feature>
<feature type="site" description="Reactive bond 3">
    <location>
        <begin position="16"/>
        <end position="17"/>
    </location>
</feature>
<feature type="glycosylation site" description="N-linked (GlcNAc...) asparagine">
    <location>
        <position position="43"/>
    </location>
</feature>
<feature type="disulfide bond">
    <location>
        <begin position="6"/>
        <end position="36"/>
    </location>
</feature>
<feature type="disulfide bond">
    <location>
        <begin position="14"/>
        <end position="33"/>
    </location>
</feature>
<feature type="disulfide bond">
    <location>
        <begin position="22"/>
        <end position="54"/>
    </location>
</feature>
<feature type="non-terminal residue">
    <location>
        <position position="1"/>
    </location>
</feature>
<feature type="non-terminal residue">
    <location>
        <position position="54"/>
    </location>
</feature>
<evidence type="ECO:0000255" key="1">
    <source>
        <dbReference type="PROSITE-ProRule" id="PRU00798"/>
    </source>
</evidence>
<organism>
    <name type="scientific">Aepypodius arfakianus</name>
    <name type="common">Wattled brush turkey</name>
    <dbReference type="NCBI Taxonomy" id="30401"/>
    <lineage>
        <taxon>Eukaryota</taxon>
        <taxon>Metazoa</taxon>
        <taxon>Chordata</taxon>
        <taxon>Craniata</taxon>
        <taxon>Vertebrata</taxon>
        <taxon>Euteleostomi</taxon>
        <taxon>Archelosauria</taxon>
        <taxon>Archosauria</taxon>
        <taxon>Dinosauria</taxon>
        <taxon>Saurischia</taxon>
        <taxon>Theropoda</taxon>
        <taxon>Coelurosauria</taxon>
        <taxon>Aves</taxon>
        <taxon>Neognathae</taxon>
        <taxon>Galloanserae</taxon>
        <taxon>Galliformes</taxon>
        <taxon>Megapodiidae</taxon>
        <taxon>Aepypodius</taxon>
    </lineage>
</organism>
<comment type="subcellular location">
    <subcellularLocation>
        <location>Secreted</location>
    </subcellularLocation>
</comment>
<comment type="domain">
    <text>Avian ovomucoid consists of three homologous, tandem Kazal family inhibitory domains.</text>
</comment>
<keyword id="KW-0903">Direct protein sequencing</keyword>
<keyword id="KW-1015">Disulfide bond</keyword>
<keyword id="KW-0325">Glycoprotein</keyword>
<keyword id="KW-0646">Protease inhibitor</keyword>
<keyword id="KW-0677">Repeat</keyword>
<keyword id="KW-0964">Secreted</keyword>
<keyword id="KW-0722">Serine protease inhibitor</keyword>
<protein>
    <recommendedName>
        <fullName>Ovomucoid</fullName>
    </recommendedName>
</protein>
<reference key="1">
    <citation type="journal article" date="1993" name="J. Protein Chem.">
        <title>Amino acid sequences of ovomucoid third domains from 27 additional species of birds.</title>
        <authorList>
            <person name="Apostol I."/>
            <person name="Giletto A."/>
            <person name="Komiyama T."/>
            <person name="Zhang W."/>
            <person name="Laskowski M. Jr."/>
        </authorList>
    </citation>
    <scope>PROTEIN SEQUENCE</scope>
</reference>
<proteinExistence type="evidence at protein level"/>
<dbReference type="PIR" id="A61588">
    <property type="entry name" value="A61588"/>
</dbReference>
<dbReference type="SMR" id="P52241"/>
<dbReference type="GO" id="GO:0005576">
    <property type="term" value="C:extracellular region"/>
    <property type="evidence" value="ECO:0007669"/>
    <property type="project" value="UniProtKB-SubCell"/>
</dbReference>
<dbReference type="GO" id="GO:0004867">
    <property type="term" value="F:serine-type endopeptidase inhibitor activity"/>
    <property type="evidence" value="ECO:0007669"/>
    <property type="project" value="UniProtKB-KW"/>
</dbReference>
<dbReference type="FunFam" id="3.30.60.30:FF:000037">
    <property type="entry name" value="Ovomucoid"/>
    <property type="match status" value="1"/>
</dbReference>
<dbReference type="Gene3D" id="3.30.60.30">
    <property type="match status" value="1"/>
</dbReference>
<dbReference type="InterPro" id="IPR051597">
    <property type="entry name" value="Bifunctional_prot_inhibitor"/>
</dbReference>
<dbReference type="InterPro" id="IPR002350">
    <property type="entry name" value="Kazal_dom"/>
</dbReference>
<dbReference type="InterPro" id="IPR036058">
    <property type="entry name" value="Kazal_dom_sf"/>
</dbReference>
<dbReference type="PANTHER" id="PTHR47729:SF1">
    <property type="entry name" value="OVOMUCOID-LIKE-RELATED"/>
    <property type="match status" value="1"/>
</dbReference>
<dbReference type="PANTHER" id="PTHR47729">
    <property type="entry name" value="SERINE PEPTIDASE INHIBITOR, KAZAL TYPE 2, TANDEM DUPLICATE 1-RELATED"/>
    <property type="match status" value="1"/>
</dbReference>
<dbReference type="Pfam" id="PF00050">
    <property type="entry name" value="Kazal_1"/>
    <property type="match status" value="1"/>
</dbReference>
<dbReference type="SMART" id="SM00280">
    <property type="entry name" value="KAZAL"/>
    <property type="match status" value="1"/>
</dbReference>
<dbReference type="SUPFAM" id="SSF100895">
    <property type="entry name" value="Kazal-type serine protease inhibitors"/>
    <property type="match status" value="1"/>
</dbReference>
<dbReference type="PROSITE" id="PS00282">
    <property type="entry name" value="KAZAL_1"/>
    <property type="match status" value="1"/>
</dbReference>
<dbReference type="PROSITE" id="PS51465">
    <property type="entry name" value="KAZAL_2"/>
    <property type="match status" value="1"/>
</dbReference>
<accession>P52241</accession>
<sequence>VVIVDCSDYPTHGCTLELKPICGSDNQTYSNKCGFCNAVAQSNGTLTLSHFGKC</sequence>